<feature type="chain" id="PRO_0000372508" description="D-tagatose-1,6-bisphosphate aldolase subunit GatZ">
    <location>
        <begin position="1"/>
        <end position="423"/>
    </location>
</feature>
<accession>Q57JK8</accession>
<name>GATZ_SALCH</name>
<evidence type="ECO:0000255" key="1">
    <source>
        <dbReference type="HAMAP-Rule" id="MF_01296"/>
    </source>
</evidence>
<protein>
    <recommendedName>
        <fullName evidence="1">D-tagatose-1,6-bisphosphate aldolase subunit GatZ</fullName>
    </recommendedName>
</protein>
<comment type="function">
    <text evidence="1">Component of the tagatose-1,6-bisphosphate aldolase GatYZ that is required for full activity and stability of the Y subunit. Could have a chaperone-like function for the proper and stable folding of GatY. When expressed alone, GatZ does not show any aldolase activity. Is involved in the catabolism of galactitol.</text>
</comment>
<comment type="pathway">
    <text evidence="1">Carbohydrate metabolism; D-tagatose 6-phosphate degradation; D-glyceraldehyde 3-phosphate and glycerone phosphate from D-tagatose 6-phosphate: step 2/2.</text>
</comment>
<comment type="subunit">
    <text evidence="1">Forms a complex with GatY.</text>
</comment>
<comment type="similarity">
    <text evidence="1">Belongs to the GatZ/KbaZ family. GatZ subfamily.</text>
</comment>
<organism>
    <name type="scientific">Salmonella choleraesuis (strain SC-B67)</name>
    <dbReference type="NCBI Taxonomy" id="321314"/>
    <lineage>
        <taxon>Bacteria</taxon>
        <taxon>Pseudomonadati</taxon>
        <taxon>Pseudomonadota</taxon>
        <taxon>Gammaproteobacteria</taxon>
        <taxon>Enterobacterales</taxon>
        <taxon>Enterobacteriaceae</taxon>
        <taxon>Salmonella</taxon>
    </lineage>
</organism>
<sequence length="423" mass="47351">MKEIIARHKAGEHLGICSVRSAHPLVIESALLFDLNTDNKVLIEATSNQVNQFGGYTGMKPADFRDFVYGIAQEVGFPRERLILGGDHLGPNCWQNEPADTAMEKSVELIKAYVAAGFSKIHLDASMSCADDPTPLDPMVVAKRAALLCQAAETTATDEQKRHLTYVIGTEVPVPGGEASAINAVHVTREQDAARTLQTHQAAFRALGLDEALNRVIAIVVQPGVEFDHTQIIHYQPQAAQALSAWIKETPMVYEAHSTDYQTRQAYRALVRDHYAILKVGPALTFALREAIFALAQMENELISPEQRSRVLEVIDEVMLNEPGYWKKYYRPTWSQAMVDIHFSLSDRIRYYWPHPRIRQSVEKLIANLNNVTLPLGLISQFMPVQFERLSEGVLTPTPHNLIIDKIQDVLRAYRFGCTPDVA</sequence>
<keyword id="KW-0298">Galactitol metabolism</keyword>
<dbReference type="EMBL" id="AE017220">
    <property type="protein sequence ID" value="AAX67104.1"/>
    <property type="molecule type" value="Genomic_DNA"/>
</dbReference>
<dbReference type="RefSeq" id="WP_011264393.1">
    <property type="nucleotide sequence ID" value="NC_006905.1"/>
</dbReference>
<dbReference type="SMR" id="Q57JK8"/>
<dbReference type="KEGG" id="sec:SCH_3198"/>
<dbReference type="HOGENOM" id="CLU_053334_0_0_6"/>
<dbReference type="UniPathway" id="UPA00704">
    <property type="reaction ID" value="UER00716"/>
</dbReference>
<dbReference type="Proteomes" id="UP000000538">
    <property type="component" value="Chromosome"/>
</dbReference>
<dbReference type="GO" id="GO:0005886">
    <property type="term" value="C:plasma membrane"/>
    <property type="evidence" value="ECO:0007669"/>
    <property type="project" value="TreeGrafter"/>
</dbReference>
<dbReference type="GO" id="GO:2001059">
    <property type="term" value="P:D-tagatose 6-phosphate catabolic process"/>
    <property type="evidence" value="ECO:0007669"/>
    <property type="project" value="UniProtKB-UniRule"/>
</dbReference>
<dbReference type="GO" id="GO:0019402">
    <property type="term" value="P:galactitol metabolic process"/>
    <property type="evidence" value="ECO:0007669"/>
    <property type="project" value="UniProtKB-KW"/>
</dbReference>
<dbReference type="GO" id="GO:0009401">
    <property type="term" value="P:phosphoenolpyruvate-dependent sugar phosphotransferase system"/>
    <property type="evidence" value="ECO:0007669"/>
    <property type="project" value="TreeGrafter"/>
</dbReference>
<dbReference type="FunFam" id="1.10.400.20:FF:000001">
    <property type="entry name" value="D-tagatose-1,6-bisphosphate aldolase subunit GatZ"/>
    <property type="match status" value="1"/>
</dbReference>
<dbReference type="FunFam" id="3.20.20.70:FF:000141">
    <property type="entry name" value="D-tagatose-1,6-bisphosphate aldolase subunit GatZ"/>
    <property type="match status" value="1"/>
</dbReference>
<dbReference type="Gene3D" id="3.20.20.70">
    <property type="entry name" value="Aldolase class I"/>
    <property type="match status" value="1"/>
</dbReference>
<dbReference type="Gene3D" id="1.10.400.20">
    <property type="entry name" value="putative tagatose 6-phosphate kinase domain like"/>
    <property type="match status" value="1"/>
</dbReference>
<dbReference type="HAMAP" id="MF_01296">
    <property type="entry name" value="Tagatose_aldol_GatZ"/>
    <property type="match status" value="1"/>
</dbReference>
<dbReference type="InterPro" id="IPR013785">
    <property type="entry name" value="Aldolase_TIM"/>
</dbReference>
<dbReference type="InterPro" id="IPR012062">
    <property type="entry name" value="GatZ/KbaZ-like"/>
</dbReference>
<dbReference type="InterPro" id="IPR050303">
    <property type="entry name" value="GatZ_KbaZ_carbometab"/>
</dbReference>
<dbReference type="InterPro" id="IPR023436">
    <property type="entry name" value="TagBP_ald_GatZ"/>
</dbReference>
<dbReference type="NCBIfam" id="TIGR02810">
    <property type="entry name" value="agaZ_gatZ"/>
    <property type="match status" value="1"/>
</dbReference>
<dbReference type="NCBIfam" id="NF011626">
    <property type="entry name" value="PRK15052.1"/>
    <property type="match status" value="1"/>
</dbReference>
<dbReference type="PANTHER" id="PTHR32502:SF12">
    <property type="entry name" value="D-TAGATOSE-1,6-BISPHOSPHATE ALDOLASE SUBUNIT GATZ"/>
    <property type="match status" value="1"/>
</dbReference>
<dbReference type="PANTHER" id="PTHR32502">
    <property type="entry name" value="N-ACETYLGALACTOSAMINE PERMEASE II COMPONENT-RELATED"/>
    <property type="match status" value="1"/>
</dbReference>
<dbReference type="Pfam" id="PF08013">
    <property type="entry name" value="GatZ_KbaZ-like"/>
    <property type="match status" value="1"/>
</dbReference>
<dbReference type="PIRSF" id="PIRSF009264">
    <property type="entry name" value="TagBP_ald_AgaZ"/>
    <property type="match status" value="1"/>
</dbReference>
<dbReference type="SUPFAM" id="SSF51569">
    <property type="entry name" value="Aldolase"/>
    <property type="match status" value="1"/>
</dbReference>
<proteinExistence type="inferred from homology"/>
<reference key="1">
    <citation type="journal article" date="2005" name="Nucleic Acids Res.">
        <title>The genome sequence of Salmonella enterica serovar Choleraesuis, a highly invasive and resistant zoonotic pathogen.</title>
        <authorList>
            <person name="Chiu C.-H."/>
            <person name="Tang P."/>
            <person name="Chu C."/>
            <person name="Hu S."/>
            <person name="Bao Q."/>
            <person name="Yu J."/>
            <person name="Chou Y.-Y."/>
            <person name="Wang H.-S."/>
            <person name="Lee Y.-S."/>
        </authorList>
    </citation>
    <scope>NUCLEOTIDE SEQUENCE [LARGE SCALE GENOMIC DNA]</scope>
    <source>
        <strain>SC-B67</strain>
    </source>
</reference>
<gene>
    <name evidence="1" type="primary">gatZ</name>
    <name type="ordered locus">SCH_3198</name>
</gene>